<proteinExistence type="inferred from homology"/>
<dbReference type="EC" id="2.1.1.-"/>
<dbReference type="EMBL" id="AE016879">
    <property type="protein sequence ID" value="AAP24454.1"/>
    <property type="molecule type" value="Genomic_DNA"/>
</dbReference>
<dbReference type="EMBL" id="AE017334">
    <property type="protein sequence ID" value="AAT29527.1"/>
    <property type="molecule type" value="Genomic_DNA"/>
</dbReference>
<dbReference type="EMBL" id="AE017225">
    <property type="protein sequence ID" value="AAT52745.1"/>
    <property type="molecule type" value="Genomic_DNA"/>
</dbReference>
<dbReference type="RefSeq" id="NP_842968.1">
    <property type="nucleotide sequence ID" value="NC_003997.3"/>
</dbReference>
<dbReference type="RefSeq" id="YP_026694.1">
    <property type="nucleotide sequence ID" value="NC_005945.1"/>
</dbReference>
<dbReference type="SMR" id="Q81Z48"/>
<dbReference type="STRING" id="261594.GBAA_0426"/>
<dbReference type="DNASU" id="1087369"/>
<dbReference type="GeneID" id="45020486"/>
<dbReference type="KEGG" id="ban:BA_0426"/>
<dbReference type="KEGG" id="banh:HYU01_02295"/>
<dbReference type="KEGG" id="bar:GBAA_0426"/>
<dbReference type="KEGG" id="bat:BAS0414"/>
<dbReference type="PATRIC" id="fig|198094.11.peg.424"/>
<dbReference type="eggNOG" id="COG2265">
    <property type="taxonomic scope" value="Bacteria"/>
</dbReference>
<dbReference type="HOGENOM" id="CLU_014689_7_1_9"/>
<dbReference type="OMA" id="SCQWLEK"/>
<dbReference type="OrthoDB" id="9804590at2"/>
<dbReference type="Proteomes" id="UP000000427">
    <property type="component" value="Chromosome"/>
</dbReference>
<dbReference type="Proteomes" id="UP000000594">
    <property type="component" value="Chromosome"/>
</dbReference>
<dbReference type="GO" id="GO:0051539">
    <property type="term" value="F:4 iron, 4 sulfur cluster binding"/>
    <property type="evidence" value="ECO:0007669"/>
    <property type="project" value="UniProtKB-KW"/>
</dbReference>
<dbReference type="GO" id="GO:0046872">
    <property type="term" value="F:metal ion binding"/>
    <property type="evidence" value="ECO:0007669"/>
    <property type="project" value="UniProtKB-KW"/>
</dbReference>
<dbReference type="GO" id="GO:0070041">
    <property type="term" value="F:rRNA (uridine-C5-)-methyltransferase activity"/>
    <property type="evidence" value="ECO:0007669"/>
    <property type="project" value="TreeGrafter"/>
</dbReference>
<dbReference type="GO" id="GO:0070475">
    <property type="term" value="P:rRNA base methylation"/>
    <property type="evidence" value="ECO:0007669"/>
    <property type="project" value="TreeGrafter"/>
</dbReference>
<dbReference type="CDD" id="cd02440">
    <property type="entry name" value="AdoMet_MTases"/>
    <property type="match status" value="1"/>
</dbReference>
<dbReference type="FunFam" id="3.40.50.150:FF:000009">
    <property type="entry name" value="23S rRNA (Uracil(1939)-C(5))-methyltransferase RlmD"/>
    <property type="match status" value="1"/>
</dbReference>
<dbReference type="FunFam" id="2.40.50.140:FF:000097">
    <property type="entry name" value="23S rRNA (uracil(1939)-C(5))-methyltransferase RlmD"/>
    <property type="match status" value="1"/>
</dbReference>
<dbReference type="FunFam" id="2.40.50.1070:FF:000003">
    <property type="entry name" value="23S rRNA (Uracil-5-)-methyltransferase RumA"/>
    <property type="match status" value="1"/>
</dbReference>
<dbReference type="Gene3D" id="2.40.50.1070">
    <property type="match status" value="1"/>
</dbReference>
<dbReference type="Gene3D" id="2.40.50.140">
    <property type="entry name" value="Nucleic acid-binding proteins"/>
    <property type="match status" value="1"/>
</dbReference>
<dbReference type="Gene3D" id="3.40.50.150">
    <property type="entry name" value="Vaccinia Virus protein VP39"/>
    <property type="match status" value="1"/>
</dbReference>
<dbReference type="InterPro" id="IPR030390">
    <property type="entry name" value="MeTrfase_TrmA_AS"/>
</dbReference>
<dbReference type="InterPro" id="IPR030391">
    <property type="entry name" value="MeTrfase_TrmA_CS"/>
</dbReference>
<dbReference type="InterPro" id="IPR012340">
    <property type="entry name" value="NA-bd_OB-fold"/>
</dbReference>
<dbReference type="InterPro" id="IPR029063">
    <property type="entry name" value="SAM-dependent_MTases_sf"/>
</dbReference>
<dbReference type="InterPro" id="IPR002792">
    <property type="entry name" value="TRAM_dom"/>
</dbReference>
<dbReference type="InterPro" id="IPR010280">
    <property type="entry name" value="U5_MeTrfase_fam"/>
</dbReference>
<dbReference type="NCBIfam" id="TIGR00479">
    <property type="entry name" value="rumA"/>
    <property type="match status" value="1"/>
</dbReference>
<dbReference type="PANTHER" id="PTHR11061:SF45">
    <property type="match status" value="1"/>
</dbReference>
<dbReference type="PANTHER" id="PTHR11061">
    <property type="entry name" value="RNA M5U METHYLTRANSFERASE"/>
    <property type="match status" value="1"/>
</dbReference>
<dbReference type="Pfam" id="PF01938">
    <property type="entry name" value="TRAM"/>
    <property type="match status" value="1"/>
</dbReference>
<dbReference type="Pfam" id="PF05958">
    <property type="entry name" value="tRNA_U5-meth_tr"/>
    <property type="match status" value="1"/>
</dbReference>
<dbReference type="SUPFAM" id="SSF50249">
    <property type="entry name" value="Nucleic acid-binding proteins"/>
    <property type="match status" value="1"/>
</dbReference>
<dbReference type="SUPFAM" id="SSF53335">
    <property type="entry name" value="S-adenosyl-L-methionine-dependent methyltransferases"/>
    <property type="match status" value="1"/>
</dbReference>
<dbReference type="PROSITE" id="PS51687">
    <property type="entry name" value="SAM_MT_RNA_M5U"/>
    <property type="match status" value="1"/>
</dbReference>
<dbReference type="PROSITE" id="PS50926">
    <property type="entry name" value="TRAM"/>
    <property type="match status" value="1"/>
</dbReference>
<dbReference type="PROSITE" id="PS01230">
    <property type="entry name" value="TRMA_1"/>
    <property type="match status" value="1"/>
</dbReference>
<dbReference type="PROSITE" id="PS01231">
    <property type="entry name" value="TRMA_2"/>
    <property type="match status" value="1"/>
</dbReference>
<comment type="similarity">
    <text evidence="3">Belongs to the class I-like SAM-binding methyltransferase superfamily. RNA M5U methyltransferase family.</text>
</comment>
<feature type="chain" id="PRO_0000161947" description="Uncharacterized RNA methyltransferase BA_0426/GBAA_0426/BAS0414">
    <location>
        <begin position="1"/>
        <end position="459"/>
    </location>
</feature>
<feature type="domain" description="TRAM" evidence="2">
    <location>
        <begin position="9"/>
        <end position="67"/>
    </location>
</feature>
<feature type="active site" description="Nucleophile" evidence="3">
    <location>
        <position position="417"/>
    </location>
</feature>
<feature type="binding site" evidence="1">
    <location>
        <position position="80"/>
    </location>
    <ligand>
        <name>[4Fe-4S] cluster</name>
        <dbReference type="ChEBI" id="CHEBI:49883"/>
    </ligand>
</feature>
<feature type="binding site" evidence="1">
    <location>
        <position position="86"/>
    </location>
    <ligand>
        <name>[4Fe-4S] cluster</name>
        <dbReference type="ChEBI" id="CHEBI:49883"/>
    </ligand>
</feature>
<feature type="binding site" evidence="1">
    <location>
        <position position="89"/>
    </location>
    <ligand>
        <name>[4Fe-4S] cluster</name>
        <dbReference type="ChEBI" id="CHEBI:49883"/>
    </ligand>
</feature>
<feature type="binding site" evidence="1">
    <location>
        <position position="168"/>
    </location>
    <ligand>
        <name>[4Fe-4S] cluster</name>
        <dbReference type="ChEBI" id="CHEBI:49883"/>
    </ligand>
</feature>
<feature type="binding site" evidence="3">
    <location>
        <position position="292"/>
    </location>
    <ligand>
        <name>S-adenosyl-L-methionine</name>
        <dbReference type="ChEBI" id="CHEBI:59789"/>
    </ligand>
</feature>
<feature type="binding site" evidence="3">
    <location>
        <position position="321"/>
    </location>
    <ligand>
        <name>S-adenosyl-L-methionine</name>
        <dbReference type="ChEBI" id="CHEBI:59789"/>
    </ligand>
</feature>
<feature type="binding site" evidence="3">
    <location>
        <position position="342"/>
    </location>
    <ligand>
        <name>S-adenosyl-L-methionine</name>
        <dbReference type="ChEBI" id="CHEBI:59789"/>
    </ligand>
</feature>
<feature type="binding site" evidence="3">
    <location>
        <position position="390"/>
    </location>
    <ligand>
        <name>S-adenosyl-L-methionine</name>
        <dbReference type="ChEBI" id="CHEBI:59789"/>
    </ligand>
</feature>
<reference key="1">
    <citation type="journal article" date="2003" name="Nature">
        <title>The genome sequence of Bacillus anthracis Ames and comparison to closely related bacteria.</title>
        <authorList>
            <person name="Read T.D."/>
            <person name="Peterson S.N."/>
            <person name="Tourasse N.J."/>
            <person name="Baillie L.W."/>
            <person name="Paulsen I.T."/>
            <person name="Nelson K.E."/>
            <person name="Tettelin H."/>
            <person name="Fouts D.E."/>
            <person name="Eisen J.A."/>
            <person name="Gill S.R."/>
            <person name="Holtzapple E.K."/>
            <person name="Okstad O.A."/>
            <person name="Helgason E."/>
            <person name="Rilstone J."/>
            <person name="Wu M."/>
            <person name="Kolonay J.F."/>
            <person name="Beanan M.J."/>
            <person name="Dodson R.J."/>
            <person name="Brinkac L.M."/>
            <person name="Gwinn M.L."/>
            <person name="DeBoy R.T."/>
            <person name="Madpu R."/>
            <person name="Daugherty S.C."/>
            <person name="Durkin A.S."/>
            <person name="Haft D.H."/>
            <person name="Nelson W.C."/>
            <person name="Peterson J.D."/>
            <person name="Pop M."/>
            <person name="Khouri H.M."/>
            <person name="Radune D."/>
            <person name="Benton J.L."/>
            <person name="Mahamoud Y."/>
            <person name="Jiang L."/>
            <person name="Hance I.R."/>
            <person name="Weidman J.F."/>
            <person name="Berry K.J."/>
            <person name="Plaut R.D."/>
            <person name="Wolf A.M."/>
            <person name="Watkins K.L."/>
            <person name="Nierman W.C."/>
            <person name="Hazen A."/>
            <person name="Cline R.T."/>
            <person name="Redmond C."/>
            <person name="Thwaite J.E."/>
            <person name="White O."/>
            <person name="Salzberg S.L."/>
            <person name="Thomason B."/>
            <person name="Friedlander A.M."/>
            <person name="Koehler T.M."/>
            <person name="Hanna P.C."/>
            <person name="Kolstoe A.-B."/>
            <person name="Fraser C.M."/>
        </authorList>
    </citation>
    <scope>NUCLEOTIDE SEQUENCE [LARGE SCALE GENOMIC DNA]</scope>
    <source>
        <strain>Ames / isolate Porton</strain>
    </source>
</reference>
<reference key="2">
    <citation type="journal article" date="2009" name="J. Bacteriol.">
        <title>The complete genome sequence of Bacillus anthracis Ames 'Ancestor'.</title>
        <authorList>
            <person name="Ravel J."/>
            <person name="Jiang L."/>
            <person name="Stanley S.T."/>
            <person name="Wilson M.R."/>
            <person name="Decker R.S."/>
            <person name="Read T.D."/>
            <person name="Worsham P."/>
            <person name="Keim P.S."/>
            <person name="Salzberg S.L."/>
            <person name="Fraser-Liggett C.M."/>
            <person name="Rasko D.A."/>
        </authorList>
    </citation>
    <scope>NUCLEOTIDE SEQUENCE [LARGE SCALE GENOMIC DNA]</scope>
    <source>
        <strain>Ames ancestor</strain>
    </source>
</reference>
<reference key="3">
    <citation type="submission" date="2004-01" db="EMBL/GenBank/DDBJ databases">
        <title>Complete genome sequence of Bacillus anthracis Sterne.</title>
        <authorList>
            <person name="Brettin T.S."/>
            <person name="Bruce D."/>
            <person name="Challacombe J.F."/>
            <person name="Gilna P."/>
            <person name="Han C."/>
            <person name="Hill K."/>
            <person name="Hitchcock P."/>
            <person name="Jackson P."/>
            <person name="Keim P."/>
            <person name="Longmire J."/>
            <person name="Lucas S."/>
            <person name="Okinaka R."/>
            <person name="Richardson P."/>
            <person name="Rubin E."/>
            <person name="Tice H."/>
        </authorList>
    </citation>
    <scope>NUCLEOTIDE SEQUENCE [LARGE SCALE GENOMIC DNA]</scope>
    <source>
        <strain>Sterne</strain>
    </source>
</reference>
<gene>
    <name type="ordered locus">BA_0426</name>
    <name type="ordered locus">GBAA_0426</name>
    <name type="ordered locus">BAS0414</name>
</gene>
<keyword id="KW-0004">4Fe-4S</keyword>
<keyword id="KW-0408">Iron</keyword>
<keyword id="KW-0411">Iron-sulfur</keyword>
<keyword id="KW-0479">Metal-binding</keyword>
<keyword id="KW-0489">Methyltransferase</keyword>
<keyword id="KW-1185">Reference proteome</keyword>
<keyword id="KW-0949">S-adenosyl-L-methionine</keyword>
<keyword id="KW-0808">Transferase</keyword>
<sequence length="459" mass="51966">MIQKQHESKLEVGQTFPVTIKRLGINGEGVGYFKRQVVFIPGALPGEEVVAETTKIQRGFAEAKVKKVRKASPHRVKAPCPVYEECGGCQLQHLDYKEQLNQKRDIVVQAFEKYMKNSMEEKIRPTLGMENPWHYRNKSQLQVGRKDEKVITGLYKQNSHQLIDIAHCMIQHKATNEATKVVRRILEKLNVSIYNEKKQKGLVRTIVTRTAVQTGEVQVTLITTKEELPNKEQFIAEVQKQMPAVKSIMQNVNWRKTSVIFGDKTFKLAGKEVIQETLGDLSFELSARAFFQLNPEQTVVLYNEAKKAAALTGNEKIVDAYCGVGTIGLWLANDAAEVRGMDVIPEAIADARKNAKRHGFTNTKYEAGKAEQWLPKWVKEGWRPDVIVVDPPRTGCDDKLLETILKVKPKQVVYVSCNPSSLARDVQALMKSYEVEYVQPVDMFPHTAHVENVVKLTLK</sequence>
<organism>
    <name type="scientific">Bacillus anthracis</name>
    <dbReference type="NCBI Taxonomy" id="1392"/>
    <lineage>
        <taxon>Bacteria</taxon>
        <taxon>Bacillati</taxon>
        <taxon>Bacillota</taxon>
        <taxon>Bacilli</taxon>
        <taxon>Bacillales</taxon>
        <taxon>Bacillaceae</taxon>
        <taxon>Bacillus</taxon>
        <taxon>Bacillus cereus group</taxon>
    </lineage>
</organism>
<evidence type="ECO:0000250" key="1"/>
<evidence type="ECO:0000255" key="2">
    <source>
        <dbReference type="PROSITE-ProRule" id="PRU00208"/>
    </source>
</evidence>
<evidence type="ECO:0000255" key="3">
    <source>
        <dbReference type="PROSITE-ProRule" id="PRU01024"/>
    </source>
</evidence>
<name>Y426_BACAN</name>
<accession>Q81Z48</accession>
<accession>Q6I3Y6</accession>
<accession>Q6KXQ0</accession>
<protein>
    <recommendedName>
        <fullName>Uncharacterized RNA methyltransferase BA_0426/GBAA_0426/BAS0414</fullName>
        <ecNumber>2.1.1.-</ecNumber>
    </recommendedName>
</protein>